<organism>
    <name type="scientific">Mus musculus</name>
    <name type="common">Mouse</name>
    <dbReference type="NCBI Taxonomy" id="10090"/>
    <lineage>
        <taxon>Eukaryota</taxon>
        <taxon>Metazoa</taxon>
        <taxon>Chordata</taxon>
        <taxon>Craniata</taxon>
        <taxon>Vertebrata</taxon>
        <taxon>Euteleostomi</taxon>
        <taxon>Mammalia</taxon>
        <taxon>Eutheria</taxon>
        <taxon>Euarchontoglires</taxon>
        <taxon>Glires</taxon>
        <taxon>Rodentia</taxon>
        <taxon>Myomorpha</taxon>
        <taxon>Muroidea</taxon>
        <taxon>Muridae</taxon>
        <taxon>Murinae</taxon>
        <taxon>Mus</taxon>
        <taxon>Mus</taxon>
    </lineage>
</organism>
<proteinExistence type="evidence at protein level"/>
<accession>Q9CWL8</accession>
<accession>Q3UL41</accession>
<accession>Q80X64</accession>
<accession>Q8VHE3</accession>
<feature type="chain" id="PRO_0000079491" description="Beta-catenin-like protein 1">
    <location>
        <begin position="1"/>
        <end position="563"/>
    </location>
</feature>
<feature type="repeat" description="HEAT 1">
    <location>
        <begin position="79"/>
        <end position="129"/>
    </location>
</feature>
<feature type="repeat" description="HEAT 2">
    <location>
        <begin position="134"/>
        <end position="176"/>
    </location>
</feature>
<feature type="repeat" description="ARM 1">
    <location>
        <begin position="178"/>
        <end position="228"/>
    </location>
</feature>
<feature type="repeat" description="ARM 2">
    <location>
        <begin position="229"/>
        <end position="273"/>
    </location>
</feature>
<feature type="repeat" description="ARM 3">
    <location>
        <begin position="274"/>
        <end position="323"/>
    </location>
</feature>
<feature type="repeat" description="ARM 4">
    <location>
        <begin position="325"/>
        <end position="363"/>
    </location>
</feature>
<feature type="repeat" description="ARM 5">
    <location>
        <begin position="364"/>
        <end position="417"/>
    </location>
</feature>
<feature type="region of interest" description="Disordered" evidence="3">
    <location>
        <begin position="1"/>
        <end position="81"/>
    </location>
</feature>
<feature type="coiled-coil region" evidence="1">
    <location>
        <begin position="476"/>
        <end position="540"/>
    </location>
</feature>
<feature type="short sequence motif" description="Nuclear localization signal" evidence="1">
    <location>
        <begin position="16"/>
        <end position="33"/>
    </location>
</feature>
<feature type="short sequence motif" description="Nuclear export signal (NES)" evidence="1">
    <location>
        <begin position="130"/>
        <end position="140"/>
    </location>
</feature>
<feature type="compositionally biased region" description="Basic and acidic residues" evidence="3">
    <location>
        <begin position="34"/>
        <end position="45"/>
    </location>
</feature>
<feature type="compositionally biased region" description="Acidic residues" evidence="3">
    <location>
        <begin position="66"/>
        <end position="78"/>
    </location>
</feature>
<feature type="modified residue" description="N-acetylmethionine" evidence="2">
    <location>
        <position position="1"/>
    </location>
</feature>
<feature type="modified residue" description="N6-acetyllysine" evidence="2">
    <location>
        <position position="91"/>
    </location>
</feature>
<feature type="modified residue" description="Phosphoserine" evidence="2">
    <location>
        <position position="389"/>
    </location>
</feature>
<feature type="modified residue" description="Phosphoserine" evidence="2">
    <location>
        <position position="545"/>
    </location>
</feature>
<feature type="sequence conflict" description="In Ref. 2; BAC32034." evidence="5" ref="2">
    <original>I</original>
    <variation>V</variation>
    <location>
        <position position="121"/>
    </location>
</feature>
<feature type="sequence conflict" description="In Ref. 3; AAH50787." evidence="5" ref="3">
    <original>G</original>
    <variation>C</variation>
    <location>
        <position position="148"/>
    </location>
</feature>
<feature type="sequence conflict" description="In Ref. 1; AAK27389." evidence="5" ref="1">
    <original>TE</original>
    <variation>QQ</variation>
    <location>
        <begin position="399"/>
        <end position="400"/>
    </location>
</feature>
<feature type="sequence conflict" description="In Ref. 2; BAC36902." evidence="5" ref="2">
    <original>L</original>
    <variation>M</variation>
    <location>
        <position position="418"/>
    </location>
</feature>
<reference key="1">
    <citation type="journal article" date="2003" name="Genomics">
        <title>Sequence, gene structure, and expression pattern of CTNNBL1, a minor-class intron-containing gene - evidence for a role in apoptosis.</title>
        <authorList>
            <person name="Jabbour L.S."/>
            <person name="Welter J.F."/>
            <person name="Kollar J."/>
            <person name="Hering T.M."/>
        </authorList>
    </citation>
    <scope>NUCLEOTIDE SEQUENCE [MRNA]</scope>
</reference>
<reference key="2">
    <citation type="journal article" date="2005" name="Science">
        <title>The transcriptional landscape of the mammalian genome.</title>
        <authorList>
            <person name="Carninci P."/>
            <person name="Kasukawa T."/>
            <person name="Katayama S."/>
            <person name="Gough J."/>
            <person name="Frith M.C."/>
            <person name="Maeda N."/>
            <person name="Oyama R."/>
            <person name="Ravasi T."/>
            <person name="Lenhard B."/>
            <person name="Wells C."/>
            <person name="Kodzius R."/>
            <person name="Shimokawa K."/>
            <person name="Bajic V.B."/>
            <person name="Brenner S.E."/>
            <person name="Batalov S."/>
            <person name="Forrest A.R."/>
            <person name="Zavolan M."/>
            <person name="Davis M.J."/>
            <person name="Wilming L.G."/>
            <person name="Aidinis V."/>
            <person name="Allen J.E."/>
            <person name="Ambesi-Impiombato A."/>
            <person name="Apweiler R."/>
            <person name="Aturaliya R.N."/>
            <person name="Bailey T.L."/>
            <person name="Bansal M."/>
            <person name="Baxter L."/>
            <person name="Beisel K.W."/>
            <person name="Bersano T."/>
            <person name="Bono H."/>
            <person name="Chalk A.M."/>
            <person name="Chiu K.P."/>
            <person name="Choudhary V."/>
            <person name="Christoffels A."/>
            <person name="Clutterbuck D.R."/>
            <person name="Crowe M.L."/>
            <person name="Dalla E."/>
            <person name="Dalrymple B.P."/>
            <person name="de Bono B."/>
            <person name="Della Gatta G."/>
            <person name="di Bernardo D."/>
            <person name="Down T."/>
            <person name="Engstrom P."/>
            <person name="Fagiolini M."/>
            <person name="Faulkner G."/>
            <person name="Fletcher C.F."/>
            <person name="Fukushima T."/>
            <person name="Furuno M."/>
            <person name="Futaki S."/>
            <person name="Gariboldi M."/>
            <person name="Georgii-Hemming P."/>
            <person name="Gingeras T.R."/>
            <person name="Gojobori T."/>
            <person name="Green R.E."/>
            <person name="Gustincich S."/>
            <person name="Harbers M."/>
            <person name="Hayashi Y."/>
            <person name="Hensch T.K."/>
            <person name="Hirokawa N."/>
            <person name="Hill D."/>
            <person name="Huminiecki L."/>
            <person name="Iacono M."/>
            <person name="Ikeo K."/>
            <person name="Iwama A."/>
            <person name="Ishikawa T."/>
            <person name="Jakt M."/>
            <person name="Kanapin A."/>
            <person name="Katoh M."/>
            <person name="Kawasawa Y."/>
            <person name="Kelso J."/>
            <person name="Kitamura H."/>
            <person name="Kitano H."/>
            <person name="Kollias G."/>
            <person name="Krishnan S.P."/>
            <person name="Kruger A."/>
            <person name="Kummerfeld S.K."/>
            <person name="Kurochkin I.V."/>
            <person name="Lareau L.F."/>
            <person name="Lazarevic D."/>
            <person name="Lipovich L."/>
            <person name="Liu J."/>
            <person name="Liuni S."/>
            <person name="McWilliam S."/>
            <person name="Madan Babu M."/>
            <person name="Madera M."/>
            <person name="Marchionni L."/>
            <person name="Matsuda H."/>
            <person name="Matsuzawa S."/>
            <person name="Miki H."/>
            <person name="Mignone F."/>
            <person name="Miyake S."/>
            <person name="Morris K."/>
            <person name="Mottagui-Tabar S."/>
            <person name="Mulder N."/>
            <person name="Nakano N."/>
            <person name="Nakauchi H."/>
            <person name="Ng P."/>
            <person name="Nilsson R."/>
            <person name="Nishiguchi S."/>
            <person name="Nishikawa S."/>
            <person name="Nori F."/>
            <person name="Ohara O."/>
            <person name="Okazaki Y."/>
            <person name="Orlando V."/>
            <person name="Pang K.C."/>
            <person name="Pavan W.J."/>
            <person name="Pavesi G."/>
            <person name="Pesole G."/>
            <person name="Petrovsky N."/>
            <person name="Piazza S."/>
            <person name="Reed J."/>
            <person name="Reid J.F."/>
            <person name="Ring B.Z."/>
            <person name="Ringwald M."/>
            <person name="Rost B."/>
            <person name="Ruan Y."/>
            <person name="Salzberg S.L."/>
            <person name="Sandelin A."/>
            <person name="Schneider C."/>
            <person name="Schoenbach C."/>
            <person name="Sekiguchi K."/>
            <person name="Semple C.A."/>
            <person name="Seno S."/>
            <person name="Sessa L."/>
            <person name="Sheng Y."/>
            <person name="Shibata Y."/>
            <person name="Shimada H."/>
            <person name="Shimada K."/>
            <person name="Silva D."/>
            <person name="Sinclair B."/>
            <person name="Sperling S."/>
            <person name="Stupka E."/>
            <person name="Sugiura K."/>
            <person name="Sultana R."/>
            <person name="Takenaka Y."/>
            <person name="Taki K."/>
            <person name="Tammoja K."/>
            <person name="Tan S.L."/>
            <person name="Tang S."/>
            <person name="Taylor M.S."/>
            <person name="Tegner J."/>
            <person name="Teichmann S.A."/>
            <person name="Ueda H.R."/>
            <person name="van Nimwegen E."/>
            <person name="Verardo R."/>
            <person name="Wei C.L."/>
            <person name="Yagi K."/>
            <person name="Yamanishi H."/>
            <person name="Zabarovsky E."/>
            <person name="Zhu S."/>
            <person name="Zimmer A."/>
            <person name="Hide W."/>
            <person name="Bult C."/>
            <person name="Grimmond S.M."/>
            <person name="Teasdale R.D."/>
            <person name="Liu E.T."/>
            <person name="Brusic V."/>
            <person name="Quackenbush J."/>
            <person name="Wahlestedt C."/>
            <person name="Mattick J.S."/>
            <person name="Hume D.A."/>
            <person name="Kai C."/>
            <person name="Sasaki D."/>
            <person name="Tomaru Y."/>
            <person name="Fukuda S."/>
            <person name="Kanamori-Katayama M."/>
            <person name="Suzuki M."/>
            <person name="Aoki J."/>
            <person name="Arakawa T."/>
            <person name="Iida J."/>
            <person name="Imamura K."/>
            <person name="Itoh M."/>
            <person name="Kato T."/>
            <person name="Kawaji H."/>
            <person name="Kawagashira N."/>
            <person name="Kawashima T."/>
            <person name="Kojima M."/>
            <person name="Kondo S."/>
            <person name="Konno H."/>
            <person name="Nakano K."/>
            <person name="Ninomiya N."/>
            <person name="Nishio T."/>
            <person name="Okada M."/>
            <person name="Plessy C."/>
            <person name="Shibata K."/>
            <person name="Shiraki T."/>
            <person name="Suzuki S."/>
            <person name="Tagami M."/>
            <person name="Waki K."/>
            <person name="Watahiki A."/>
            <person name="Okamura-Oho Y."/>
            <person name="Suzuki H."/>
            <person name="Kawai J."/>
            <person name="Hayashizaki Y."/>
        </authorList>
    </citation>
    <scope>NUCLEOTIDE SEQUENCE [LARGE SCALE MRNA]</scope>
    <source>
        <strain>C57BL/6J</strain>
        <tissue>Embryo</tissue>
        <tissue>Retina</tissue>
    </source>
</reference>
<reference key="3">
    <citation type="journal article" date="2004" name="Genome Res.">
        <title>The status, quality, and expansion of the NIH full-length cDNA project: the Mammalian Gene Collection (MGC).</title>
        <authorList>
            <consortium name="The MGC Project Team"/>
        </authorList>
    </citation>
    <scope>NUCLEOTIDE SEQUENCE [LARGE SCALE MRNA]</scope>
    <source>
        <tissue>Testis</tissue>
    </source>
</reference>
<reference key="4">
    <citation type="journal article" date="2010" name="Cell">
        <title>A tissue-specific atlas of mouse protein phosphorylation and expression.</title>
        <authorList>
            <person name="Huttlin E.L."/>
            <person name="Jedrychowski M.P."/>
            <person name="Elias J.E."/>
            <person name="Goswami T."/>
            <person name="Rad R."/>
            <person name="Beausoleil S.A."/>
            <person name="Villen J."/>
            <person name="Haas W."/>
            <person name="Sowa M.E."/>
            <person name="Gygi S.P."/>
        </authorList>
    </citation>
    <scope>IDENTIFICATION BY MASS SPECTROMETRY [LARGE SCALE ANALYSIS]</scope>
    <source>
        <tissue>Brain</tissue>
        <tissue>Spleen</tissue>
        <tissue>Testis</tissue>
    </source>
</reference>
<reference key="5">
    <citation type="journal article" date="2010" name="J. Immunol.">
        <title>CTNNBL1 is dispensable for Ig class switch recombination.</title>
        <authorList>
            <person name="Han L."/>
            <person name="Masani S."/>
            <person name="Yu K."/>
        </authorList>
    </citation>
    <scope>FUNCTION</scope>
</reference>
<evidence type="ECO:0000250" key="1"/>
<evidence type="ECO:0000250" key="2">
    <source>
        <dbReference type="UniProtKB" id="Q8WYA6"/>
    </source>
</evidence>
<evidence type="ECO:0000256" key="3">
    <source>
        <dbReference type="SAM" id="MobiDB-lite"/>
    </source>
</evidence>
<evidence type="ECO:0000269" key="4">
    <source>
    </source>
</evidence>
<evidence type="ECO:0000305" key="5"/>
<comment type="function">
    <text evidence="2 4">Component of the PRP19-CDC5L complex that forms an integral part of the spliceosome and is required for activating pre-mRNA splicing (By similarity). Participates in AID/AICDA-mediated somatic hypermutation (SHM) and class-switch recombination (CSR), 2 processes resulting in the production of high-affinity, mutated isotype-switched antibodies (PubMed:20585033).</text>
</comment>
<comment type="subunit">
    <text evidence="1">Component of the PRP19-CDC5L splicing complex composed of a core complex comprising a homotetramer of PRPF19, CDC5L, PLRG1 and BCAS2, and at least three less stably associated proteins CTNNBL1, CWC15 and HSPA8. Interacts directly with CWC15 and CDC5L in the complex. Interacts with AICDA; the interaction is important for the antibody diversification activity of AICDA. Interacts with PRPF31 (via its NLS). Interacts (via its N-terminal NLS) with KPNA1 and KPNA2 (By similarity).</text>
</comment>
<comment type="subcellular location">
    <subcellularLocation>
        <location evidence="1">Nucleus</location>
    </subcellularLocation>
</comment>
<comment type="domain">
    <text evidence="1">The surface residues of the concave side of the superhelical ARM repeat region contribute to, but are not essential for NLS binding.</text>
</comment>
<gene>
    <name type="primary">Ctnnbl1</name>
</gene>
<name>CTBL1_MOUSE</name>
<sequence>MDVGELLSYQPNRGTKRPRDDEEEELKTRRKQTGPRERGRYREEEATAAEDTADDKKRLLQIIDRDGEEEEEEEEPLDESSVKKMILTFEKRSYKNQELRIKFPDNPEKFMESELDLNDIIQEMHVVATMPDLYHLLVELSAVQSLLGLLGHDNTDVSIAVVDLLQELTDIDTLHESEEGAEVLIDALVDGQVAALLVQNLERLDESVREEADGVHNTLAIVENMAEFRPEMCTEAAQQGLLQWLLKRLKAKMPFDANKLYCSEVLAILLQDNDENRELLGELDGIDVLLQQLSVFKRHNPSTAEEQEMMENLFDALCSCLMLSSNRERFLKGEGLQLMNLMLREKKVSRSSALKVLDHAMIGPEGTDNCHKFVDILGLRTIFPLFMKSPRKIKKVGTTEKEHEEHVCSILASLLRNLRGQQRTRLLNKFTENDSEKVDRLMELHFKYLSAMQVADKKIEGEKHDIVRRGEIIDNDMEDEFYLRRLDAGLFILQHICYIMAEICNANVPQIRQRVHQILNMRGSSIKIVRHIIKEYAENIGDGRSPEFRETEQKRILALLENF</sequence>
<protein>
    <recommendedName>
        <fullName>Beta-catenin-like protein 1</fullName>
    </recommendedName>
    <alternativeName>
        <fullName>Nuclear-associated protein</fullName>
        <shortName>NAP</shortName>
    </alternativeName>
</protein>
<dbReference type="EMBL" id="AY009405">
    <property type="protein sequence ID" value="AAK27389.1"/>
    <property type="molecule type" value="mRNA"/>
</dbReference>
<dbReference type="EMBL" id="AK010547">
    <property type="protein sequence ID" value="BAB27020.1"/>
    <property type="molecule type" value="mRNA"/>
</dbReference>
<dbReference type="EMBL" id="AK044690">
    <property type="protein sequence ID" value="BAC32034.1"/>
    <property type="molecule type" value="mRNA"/>
</dbReference>
<dbReference type="EMBL" id="AK077616">
    <property type="protein sequence ID" value="BAC36902.1"/>
    <property type="molecule type" value="mRNA"/>
</dbReference>
<dbReference type="EMBL" id="AK145598">
    <property type="protein sequence ID" value="BAE26532.1"/>
    <property type="molecule type" value="mRNA"/>
</dbReference>
<dbReference type="EMBL" id="AK145719">
    <property type="protein sequence ID" value="BAE26609.1"/>
    <property type="molecule type" value="mRNA"/>
</dbReference>
<dbReference type="EMBL" id="BC050787">
    <property type="protein sequence ID" value="AAH50787.1"/>
    <property type="molecule type" value="mRNA"/>
</dbReference>
<dbReference type="CCDS" id="CCDS16982.1"/>
<dbReference type="RefSeq" id="NP_079956.3">
    <property type="nucleotide sequence ID" value="NM_025680.4"/>
</dbReference>
<dbReference type="SMR" id="Q9CWL8"/>
<dbReference type="BioGRID" id="211616">
    <property type="interactions" value="31"/>
</dbReference>
<dbReference type="ComplexPortal" id="CPX-5825">
    <property type="entry name" value="PRP19-CDC5L complex"/>
</dbReference>
<dbReference type="FunCoup" id="Q9CWL8">
    <property type="interactions" value="4420"/>
</dbReference>
<dbReference type="IntAct" id="Q9CWL8">
    <property type="interactions" value="13"/>
</dbReference>
<dbReference type="STRING" id="10090.ENSMUSP00000029178"/>
<dbReference type="GlyGen" id="Q9CWL8">
    <property type="glycosylation" value="1 site, 1 N-linked glycan (1 site)"/>
</dbReference>
<dbReference type="iPTMnet" id="Q9CWL8"/>
<dbReference type="PhosphoSitePlus" id="Q9CWL8"/>
<dbReference type="jPOST" id="Q9CWL8"/>
<dbReference type="PaxDb" id="10090-ENSMUSP00000029178"/>
<dbReference type="PeptideAtlas" id="Q9CWL8"/>
<dbReference type="ProteomicsDB" id="277913"/>
<dbReference type="Pumba" id="Q9CWL8"/>
<dbReference type="Antibodypedia" id="750">
    <property type="antibodies" value="331 antibodies from 35 providers"/>
</dbReference>
<dbReference type="DNASU" id="66642"/>
<dbReference type="Ensembl" id="ENSMUST00000029178.7">
    <property type="protein sequence ID" value="ENSMUSP00000029178.7"/>
    <property type="gene ID" value="ENSMUSG00000027649.16"/>
</dbReference>
<dbReference type="GeneID" id="66642"/>
<dbReference type="KEGG" id="mmu:66642"/>
<dbReference type="UCSC" id="uc008nph.2">
    <property type="organism name" value="mouse"/>
</dbReference>
<dbReference type="AGR" id="MGI:1913892"/>
<dbReference type="CTD" id="56259"/>
<dbReference type="MGI" id="MGI:1913892">
    <property type="gene designation" value="Ctnnbl1"/>
</dbReference>
<dbReference type="VEuPathDB" id="HostDB:ENSMUSG00000027649"/>
<dbReference type="eggNOG" id="KOG2734">
    <property type="taxonomic scope" value="Eukaryota"/>
</dbReference>
<dbReference type="GeneTree" id="ENSGT00390000006931"/>
<dbReference type="HOGENOM" id="CLU_017098_2_1_1"/>
<dbReference type="InParanoid" id="Q9CWL8"/>
<dbReference type="OMA" id="TDWREQE"/>
<dbReference type="OrthoDB" id="1898821at2759"/>
<dbReference type="PhylomeDB" id="Q9CWL8"/>
<dbReference type="TreeFam" id="TF314294"/>
<dbReference type="Reactome" id="R-MMU-72163">
    <property type="pathway name" value="mRNA Splicing - Major Pathway"/>
</dbReference>
<dbReference type="BioGRID-ORCS" id="66642">
    <property type="hits" value="23 hits in 79 CRISPR screens"/>
</dbReference>
<dbReference type="ChiTaRS" id="Ctnnbl1">
    <property type="organism name" value="mouse"/>
</dbReference>
<dbReference type="PRO" id="PR:Q9CWL8"/>
<dbReference type="Proteomes" id="UP000000589">
    <property type="component" value="Chromosome 2"/>
</dbReference>
<dbReference type="RNAct" id="Q9CWL8">
    <property type="molecule type" value="protein"/>
</dbReference>
<dbReference type="Bgee" id="ENSMUSG00000027649">
    <property type="expression patterns" value="Expressed in ear vesicle and 255 other cell types or tissues"/>
</dbReference>
<dbReference type="GO" id="GO:0005813">
    <property type="term" value="C:centrosome"/>
    <property type="evidence" value="ECO:0007669"/>
    <property type="project" value="Ensembl"/>
</dbReference>
<dbReference type="GO" id="GO:0005829">
    <property type="term" value="C:cytosol"/>
    <property type="evidence" value="ECO:0007669"/>
    <property type="project" value="Ensembl"/>
</dbReference>
<dbReference type="GO" id="GO:0005654">
    <property type="term" value="C:nucleoplasm"/>
    <property type="evidence" value="ECO:0007669"/>
    <property type="project" value="Ensembl"/>
</dbReference>
<dbReference type="GO" id="GO:0005634">
    <property type="term" value="C:nucleus"/>
    <property type="evidence" value="ECO:0000250"/>
    <property type="project" value="UniProtKB"/>
</dbReference>
<dbReference type="GO" id="GO:0000974">
    <property type="term" value="C:Prp19 complex"/>
    <property type="evidence" value="ECO:0000250"/>
    <property type="project" value="UniProtKB"/>
</dbReference>
<dbReference type="GO" id="GO:0005681">
    <property type="term" value="C:spliceosomal complex"/>
    <property type="evidence" value="ECO:0000250"/>
    <property type="project" value="UniProtKB"/>
</dbReference>
<dbReference type="GO" id="GO:0019899">
    <property type="term" value="F:enzyme binding"/>
    <property type="evidence" value="ECO:0007669"/>
    <property type="project" value="Ensembl"/>
</dbReference>
<dbReference type="GO" id="GO:0002250">
    <property type="term" value="P:adaptive immune response"/>
    <property type="evidence" value="ECO:0007669"/>
    <property type="project" value="UniProtKB-KW"/>
</dbReference>
<dbReference type="GO" id="GO:0006915">
    <property type="term" value="P:apoptotic process"/>
    <property type="evidence" value="ECO:0000266"/>
    <property type="project" value="MGI"/>
</dbReference>
<dbReference type="GO" id="GO:0000398">
    <property type="term" value="P:mRNA splicing, via spliceosome"/>
    <property type="evidence" value="ECO:0000303"/>
    <property type="project" value="ComplexPortal"/>
</dbReference>
<dbReference type="GO" id="GO:0043065">
    <property type="term" value="P:positive regulation of apoptotic process"/>
    <property type="evidence" value="ECO:0007669"/>
    <property type="project" value="Ensembl"/>
</dbReference>
<dbReference type="GO" id="GO:0016445">
    <property type="term" value="P:somatic diversification of immunoglobulins"/>
    <property type="evidence" value="ECO:0007669"/>
    <property type="project" value="Ensembl"/>
</dbReference>
<dbReference type="FunFam" id="1.25.10.10:FF:001136">
    <property type="entry name" value="Beta-catenin-like protein 1"/>
    <property type="match status" value="1"/>
</dbReference>
<dbReference type="Gene3D" id="1.25.10.10">
    <property type="entry name" value="Leucine-rich Repeat Variant"/>
    <property type="match status" value="1"/>
</dbReference>
<dbReference type="InterPro" id="IPR011989">
    <property type="entry name" value="ARM-like"/>
</dbReference>
<dbReference type="InterPro" id="IPR016024">
    <property type="entry name" value="ARM-type_fold"/>
</dbReference>
<dbReference type="InterPro" id="IPR039678">
    <property type="entry name" value="CTNNBL1"/>
</dbReference>
<dbReference type="InterPro" id="IPR013180">
    <property type="entry name" value="CTNNBL1_N"/>
</dbReference>
<dbReference type="PANTHER" id="PTHR14978:SF0">
    <property type="entry name" value="BETA-CATENIN-LIKE PROTEIN 1"/>
    <property type="match status" value="1"/>
</dbReference>
<dbReference type="PANTHER" id="PTHR14978">
    <property type="entry name" value="BETA-CATENIN-LIKE PROTEIN 1 NUCLEAR ASSOCIATED PROTEIN"/>
    <property type="match status" value="1"/>
</dbReference>
<dbReference type="Pfam" id="PF08216">
    <property type="entry name" value="CTNNBL"/>
    <property type="match status" value="1"/>
</dbReference>
<dbReference type="SMART" id="SM01156">
    <property type="entry name" value="DUF1716"/>
    <property type="match status" value="1"/>
</dbReference>
<dbReference type="SUPFAM" id="SSF48371">
    <property type="entry name" value="ARM repeat"/>
    <property type="match status" value="1"/>
</dbReference>
<keyword id="KW-0007">Acetylation</keyword>
<keyword id="KW-1064">Adaptive immunity</keyword>
<keyword id="KW-0175">Coiled coil</keyword>
<keyword id="KW-0391">Immunity</keyword>
<keyword id="KW-0539">Nucleus</keyword>
<keyword id="KW-0597">Phosphoprotein</keyword>
<keyword id="KW-1185">Reference proteome</keyword>
<keyword id="KW-0677">Repeat</keyword>